<sequence>MFRNYNWFDAKEPISYESEIYAKGLKFQRPQITVDGRHWEQLAVERMTKDAAGYVYGCAGKRETYDKNMESFKKWSIIPNRLIKSGFPDLSTTVFGQKYPFPIALAPVGVQKIFNPEGESGSCAAATREHIPYIISTASATSFEDIEKASGPGERWYQLYWPSNDHQDITISLLNRAKKTGCRVLIVTLDTFILGWRPSDMDNGYDPFLNPDSIGVEHGFSDPVFRKQFKEKHGVEVEENMLEAAKEFAGIVFPGISHDWEDLKFLRKHWDGPIVLKGIMNVPDAKKAVEYGMQGIVVSNHGGRQQDGGVASLTMLPKIVDAVGDKLDVLFDSGVRSGADIAKALALGAKMVLIGRPYVYGLALEGSSGVSHVIRCLLGDLELTLHLSGIVSVKPKDLNRDVLYKEE</sequence>
<evidence type="ECO:0000255" key="1">
    <source>
        <dbReference type="PROSITE-ProRule" id="PRU00683"/>
    </source>
</evidence>
<evidence type="ECO:0000269" key="2">
    <source>
    </source>
</evidence>
<evidence type="ECO:0000305" key="3"/>
<comment type="cofactor">
    <cofactor evidence="1">
        <name>FMN</name>
        <dbReference type="ChEBI" id="CHEBI:58210"/>
    </cofactor>
</comment>
<comment type="subcellular location">
    <subcellularLocation>
        <location evidence="2">Cytoplasm</location>
    </subcellularLocation>
    <subcellularLocation>
        <location evidence="2">Nucleus</location>
    </subcellularLocation>
</comment>
<comment type="similarity">
    <text evidence="1">Belongs to the FMN-dependent alpha-hydroxy acid dehydrogenase family.</text>
</comment>
<accession>Q9HDX2</accession>
<organism>
    <name type="scientific">Schizosaccharomyces pombe (strain 972 / ATCC 24843)</name>
    <name type="common">Fission yeast</name>
    <dbReference type="NCBI Taxonomy" id="284812"/>
    <lineage>
        <taxon>Eukaryota</taxon>
        <taxon>Fungi</taxon>
        <taxon>Dikarya</taxon>
        <taxon>Ascomycota</taxon>
        <taxon>Taphrinomycotina</taxon>
        <taxon>Schizosaccharomycetes</taxon>
        <taxon>Schizosaccharomycetales</taxon>
        <taxon>Schizosaccharomycetaceae</taxon>
        <taxon>Schizosaccharomyces</taxon>
    </lineage>
</organism>
<gene>
    <name type="ORF">SPAPB1A11.03</name>
</gene>
<proteinExistence type="inferred from homology"/>
<protein>
    <recommendedName>
        <fullName evidence="3">FMN-dependent alpha-hydroxy acid dehydrogenase PB1A11.03</fullName>
        <ecNumber evidence="3">1.13.12.-</ecNumber>
    </recommendedName>
</protein>
<reference key="1">
    <citation type="journal article" date="2002" name="Nature">
        <title>The genome sequence of Schizosaccharomyces pombe.</title>
        <authorList>
            <person name="Wood V."/>
            <person name="Gwilliam R."/>
            <person name="Rajandream M.A."/>
            <person name="Lyne M.H."/>
            <person name="Lyne R."/>
            <person name="Stewart A."/>
            <person name="Sgouros J.G."/>
            <person name="Peat N."/>
            <person name="Hayles J."/>
            <person name="Baker S.G."/>
            <person name="Basham D."/>
            <person name="Bowman S."/>
            <person name="Brooks K."/>
            <person name="Brown D."/>
            <person name="Brown S."/>
            <person name="Chillingworth T."/>
            <person name="Churcher C.M."/>
            <person name="Collins M."/>
            <person name="Connor R."/>
            <person name="Cronin A."/>
            <person name="Davis P."/>
            <person name="Feltwell T."/>
            <person name="Fraser A."/>
            <person name="Gentles S."/>
            <person name="Goble A."/>
            <person name="Hamlin N."/>
            <person name="Harris D.E."/>
            <person name="Hidalgo J."/>
            <person name="Hodgson G."/>
            <person name="Holroyd S."/>
            <person name="Hornsby T."/>
            <person name="Howarth S."/>
            <person name="Huckle E.J."/>
            <person name="Hunt S."/>
            <person name="Jagels K."/>
            <person name="James K.D."/>
            <person name="Jones L."/>
            <person name="Jones M."/>
            <person name="Leather S."/>
            <person name="McDonald S."/>
            <person name="McLean J."/>
            <person name="Mooney P."/>
            <person name="Moule S."/>
            <person name="Mungall K.L."/>
            <person name="Murphy L.D."/>
            <person name="Niblett D."/>
            <person name="Odell C."/>
            <person name="Oliver K."/>
            <person name="O'Neil S."/>
            <person name="Pearson D."/>
            <person name="Quail M.A."/>
            <person name="Rabbinowitsch E."/>
            <person name="Rutherford K.M."/>
            <person name="Rutter S."/>
            <person name="Saunders D."/>
            <person name="Seeger K."/>
            <person name="Sharp S."/>
            <person name="Skelton J."/>
            <person name="Simmonds M.N."/>
            <person name="Squares R."/>
            <person name="Squares S."/>
            <person name="Stevens K."/>
            <person name="Taylor K."/>
            <person name="Taylor R.G."/>
            <person name="Tivey A."/>
            <person name="Walsh S.V."/>
            <person name="Warren T."/>
            <person name="Whitehead S."/>
            <person name="Woodward J.R."/>
            <person name="Volckaert G."/>
            <person name="Aert R."/>
            <person name="Robben J."/>
            <person name="Grymonprez B."/>
            <person name="Weltjens I."/>
            <person name="Vanstreels E."/>
            <person name="Rieger M."/>
            <person name="Schaefer M."/>
            <person name="Mueller-Auer S."/>
            <person name="Gabel C."/>
            <person name="Fuchs M."/>
            <person name="Duesterhoeft A."/>
            <person name="Fritzc C."/>
            <person name="Holzer E."/>
            <person name="Moestl D."/>
            <person name="Hilbert H."/>
            <person name="Borzym K."/>
            <person name="Langer I."/>
            <person name="Beck A."/>
            <person name="Lehrach H."/>
            <person name="Reinhardt R."/>
            <person name="Pohl T.M."/>
            <person name="Eger P."/>
            <person name="Zimmermann W."/>
            <person name="Wedler H."/>
            <person name="Wambutt R."/>
            <person name="Purnelle B."/>
            <person name="Goffeau A."/>
            <person name="Cadieu E."/>
            <person name="Dreano S."/>
            <person name="Gloux S."/>
            <person name="Lelaure V."/>
            <person name="Mottier S."/>
            <person name="Galibert F."/>
            <person name="Aves S.J."/>
            <person name="Xiang Z."/>
            <person name="Hunt C."/>
            <person name="Moore K."/>
            <person name="Hurst S.M."/>
            <person name="Lucas M."/>
            <person name="Rochet M."/>
            <person name="Gaillardin C."/>
            <person name="Tallada V.A."/>
            <person name="Garzon A."/>
            <person name="Thode G."/>
            <person name="Daga R.R."/>
            <person name="Cruzado L."/>
            <person name="Jimenez J."/>
            <person name="Sanchez M."/>
            <person name="del Rey F."/>
            <person name="Benito J."/>
            <person name="Dominguez A."/>
            <person name="Revuelta J.L."/>
            <person name="Moreno S."/>
            <person name="Armstrong J."/>
            <person name="Forsburg S.L."/>
            <person name="Cerutti L."/>
            <person name="Lowe T."/>
            <person name="McCombie W.R."/>
            <person name="Paulsen I."/>
            <person name="Potashkin J."/>
            <person name="Shpakovski G.V."/>
            <person name="Ussery D."/>
            <person name="Barrell B.G."/>
            <person name="Nurse P."/>
        </authorList>
    </citation>
    <scope>NUCLEOTIDE SEQUENCE [LARGE SCALE GENOMIC DNA]</scope>
    <source>
        <strain>972 / ATCC 24843</strain>
    </source>
</reference>
<reference key="2">
    <citation type="journal article" date="2006" name="Nat. Biotechnol.">
        <title>ORFeome cloning and global analysis of protein localization in the fission yeast Schizosaccharomyces pombe.</title>
        <authorList>
            <person name="Matsuyama A."/>
            <person name="Arai R."/>
            <person name="Yashiroda Y."/>
            <person name="Shirai A."/>
            <person name="Kamata A."/>
            <person name="Sekido S."/>
            <person name="Kobayashi Y."/>
            <person name="Hashimoto A."/>
            <person name="Hamamoto M."/>
            <person name="Hiraoka Y."/>
            <person name="Horinouchi S."/>
            <person name="Yoshida M."/>
        </authorList>
    </citation>
    <scope>SUBCELLULAR LOCATION [LARGE SCALE ANALYSIS]</scope>
</reference>
<dbReference type="EC" id="1.13.12.-" evidence="3"/>
<dbReference type="EMBL" id="CU329670">
    <property type="protein sequence ID" value="CAC19728.1"/>
    <property type="molecule type" value="Genomic_DNA"/>
</dbReference>
<dbReference type="RefSeq" id="NP_593999.1">
    <property type="nucleotide sequence ID" value="NM_001019425.2"/>
</dbReference>
<dbReference type="SMR" id="Q9HDX2"/>
<dbReference type="BioGRID" id="279823">
    <property type="interactions" value="2"/>
</dbReference>
<dbReference type="FunCoup" id="Q9HDX2">
    <property type="interactions" value="113"/>
</dbReference>
<dbReference type="STRING" id="284812.Q9HDX2"/>
<dbReference type="iPTMnet" id="Q9HDX2"/>
<dbReference type="PaxDb" id="4896-SPAPB1A11.03.1"/>
<dbReference type="EnsemblFungi" id="SPAPB1A11.03.1">
    <property type="protein sequence ID" value="SPAPB1A11.03.1:pep"/>
    <property type="gene ID" value="SPAPB1A11.03"/>
</dbReference>
<dbReference type="KEGG" id="spo:2543401"/>
<dbReference type="PomBase" id="SPAPB1A11.03"/>
<dbReference type="VEuPathDB" id="FungiDB:SPAPB1A11.03"/>
<dbReference type="eggNOG" id="KOG0538">
    <property type="taxonomic scope" value="Eukaryota"/>
</dbReference>
<dbReference type="HOGENOM" id="CLU_020639_0_1_1"/>
<dbReference type="InParanoid" id="Q9HDX2"/>
<dbReference type="OMA" id="WFQLYWL"/>
<dbReference type="PhylomeDB" id="Q9HDX2"/>
<dbReference type="PRO" id="PR:Q9HDX2"/>
<dbReference type="Proteomes" id="UP000002485">
    <property type="component" value="Chromosome I"/>
</dbReference>
<dbReference type="GO" id="GO:0005737">
    <property type="term" value="C:cytoplasm"/>
    <property type="evidence" value="ECO:0007669"/>
    <property type="project" value="UniProtKB-SubCell"/>
</dbReference>
<dbReference type="GO" id="GO:0005634">
    <property type="term" value="C:nucleus"/>
    <property type="evidence" value="ECO:0007669"/>
    <property type="project" value="UniProtKB-SubCell"/>
</dbReference>
<dbReference type="GO" id="GO:0010181">
    <property type="term" value="F:FMN binding"/>
    <property type="evidence" value="ECO:0007669"/>
    <property type="project" value="InterPro"/>
</dbReference>
<dbReference type="GO" id="GO:0050040">
    <property type="term" value="F:lactate 2-monooxygenase activity"/>
    <property type="evidence" value="ECO:0007669"/>
    <property type="project" value="UniProtKB-EC"/>
</dbReference>
<dbReference type="CDD" id="cd03332">
    <property type="entry name" value="LMO_FMN"/>
    <property type="match status" value="1"/>
</dbReference>
<dbReference type="FunFam" id="3.20.20.70:FF:000132">
    <property type="entry name" value="FMN dependent dehydrogenase"/>
    <property type="match status" value="1"/>
</dbReference>
<dbReference type="Gene3D" id="3.20.20.70">
    <property type="entry name" value="Aldolase class I"/>
    <property type="match status" value="1"/>
</dbReference>
<dbReference type="InterPro" id="IPR013785">
    <property type="entry name" value="Aldolase_TIM"/>
</dbReference>
<dbReference type="InterPro" id="IPR012133">
    <property type="entry name" value="Alpha-hydoxy_acid_DH_FMN"/>
</dbReference>
<dbReference type="InterPro" id="IPR000262">
    <property type="entry name" value="FMN-dep_DH"/>
</dbReference>
<dbReference type="InterPro" id="IPR037396">
    <property type="entry name" value="FMN_HAD"/>
</dbReference>
<dbReference type="InterPro" id="IPR008259">
    <property type="entry name" value="FMN_hydac_DH_AS"/>
</dbReference>
<dbReference type="InterPro" id="IPR037350">
    <property type="entry name" value="LMO_FMN"/>
</dbReference>
<dbReference type="PANTHER" id="PTHR10578:SF143">
    <property type="entry name" value="FMN-DEPENDENT ALPHA-HYDROXY ACID DEHYDROGENASE PB1A11.03"/>
    <property type="match status" value="1"/>
</dbReference>
<dbReference type="PANTHER" id="PTHR10578">
    <property type="entry name" value="S -2-HYDROXY-ACID OXIDASE-RELATED"/>
    <property type="match status" value="1"/>
</dbReference>
<dbReference type="Pfam" id="PF01070">
    <property type="entry name" value="FMN_dh"/>
    <property type="match status" value="1"/>
</dbReference>
<dbReference type="PIRSF" id="PIRSF000138">
    <property type="entry name" value="Al-hdrx_acd_dh"/>
    <property type="match status" value="1"/>
</dbReference>
<dbReference type="SUPFAM" id="SSF51395">
    <property type="entry name" value="FMN-linked oxidoreductases"/>
    <property type="match status" value="1"/>
</dbReference>
<dbReference type="PROSITE" id="PS00557">
    <property type="entry name" value="FMN_HYDROXY_ACID_DH_1"/>
    <property type="match status" value="1"/>
</dbReference>
<dbReference type="PROSITE" id="PS51349">
    <property type="entry name" value="FMN_HYDROXY_ACID_DH_2"/>
    <property type="match status" value="1"/>
</dbReference>
<feature type="chain" id="PRO_0000316582" description="FMN-dependent alpha-hydroxy acid dehydrogenase PB1A11.03">
    <location>
        <begin position="1"/>
        <end position="407"/>
    </location>
</feature>
<feature type="domain" description="FMN hydroxy acid dehydrogenase" evidence="1">
    <location>
        <begin position="28"/>
        <end position="406"/>
    </location>
</feature>
<feature type="active site" description="Proton acceptor" evidence="1">
    <location>
        <position position="301"/>
    </location>
</feature>
<feature type="binding site" evidence="1">
    <location>
        <position position="54"/>
    </location>
    <ligand>
        <name>a 2-oxocarboxylate</name>
        <dbReference type="ChEBI" id="CHEBI:35179"/>
    </ligand>
</feature>
<feature type="binding site" evidence="1">
    <location>
        <position position="136"/>
    </location>
    <ligand>
        <name>FMN</name>
        <dbReference type="ChEBI" id="CHEBI:58210"/>
    </ligand>
</feature>
<feature type="binding site" evidence="1">
    <location>
        <position position="158"/>
    </location>
    <ligand>
        <name>FMN</name>
        <dbReference type="ChEBI" id="CHEBI:58210"/>
    </ligand>
</feature>
<feature type="binding site" evidence="1">
    <location>
        <position position="160"/>
    </location>
    <ligand>
        <name>a 2-oxocarboxylate</name>
        <dbReference type="ChEBI" id="CHEBI:35179"/>
    </ligand>
</feature>
<feature type="binding site" evidence="1">
    <location>
        <position position="188"/>
    </location>
    <ligand>
        <name>FMN</name>
        <dbReference type="ChEBI" id="CHEBI:58210"/>
    </ligand>
</feature>
<feature type="binding site" evidence="1">
    <location>
        <position position="197"/>
    </location>
    <ligand>
        <name>a 2-oxocarboxylate</name>
        <dbReference type="ChEBI" id="CHEBI:35179"/>
    </ligand>
</feature>
<feature type="binding site" evidence="1">
    <location>
        <position position="277"/>
    </location>
    <ligand>
        <name>FMN</name>
        <dbReference type="ChEBI" id="CHEBI:58210"/>
    </ligand>
</feature>
<feature type="binding site" evidence="1">
    <location>
        <position position="304"/>
    </location>
    <ligand>
        <name>a 2-oxocarboxylate</name>
        <dbReference type="ChEBI" id="CHEBI:35179"/>
    </ligand>
</feature>
<feature type="binding site" evidence="1">
    <location>
        <begin position="332"/>
        <end position="336"/>
    </location>
    <ligand>
        <name>FMN</name>
        <dbReference type="ChEBI" id="CHEBI:58210"/>
    </ligand>
</feature>
<feature type="binding site" evidence="1">
    <location>
        <begin position="355"/>
        <end position="356"/>
    </location>
    <ligand>
        <name>FMN</name>
        <dbReference type="ChEBI" id="CHEBI:58210"/>
    </ligand>
</feature>
<keyword id="KW-0963">Cytoplasm</keyword>
<keyword id="KW-0285">Flavoprotein</keyword>
<keyword id="KW-0288">FMN</keyword>
<keyword id="KW-0503">Monooxygenase</keyword>
<keyword id="KW-0539">Nucleus</keyword>
<keyword id="KW-0560">Oxidoreductase</keyword>
<keyword id="KW-1185">Reference proteome</keyword>
<name>YKN3_SCHPO</name>